<dbReference type="EMBL" id="AJ249804">
    <property type="protein sequence ID" value="CAC80652.1"/>
    <property type="molecule type" value="Genomic_DNA"/>
</dbReference>
<dbReference type="EMBL" id="AL596164">
    <property type="protein sequence ID" value="CAC95472.1"/>
    <property type="molecule type" value="Genomic_DNA"/>
</dbReference>
<dbReference type="PIR" id="AH1462">
    <property type="entry name" value="AH1462"/>
</dbReference>
<dbReference type="RefSeq" id="WP_003772492.1">
    <property type="nucleotide sequence ID" value="NC_003212.1"/>
</dbReference>
<dbReference type="SMR" id="Q92F67"/>
<dbReference type="STRING" id="272626.gene:17564551"/>
<dbReference type="GeneID" id="93233674"/>
<dbReference type="KEGG" id="lin:lin0239"/>
<dbReference type="eggNOG" id="COG4808">
    <property type="taxonomic scope" value="Bacteria"/>
</dbReference>
<dbReference type="HOGENOM" id="CLU_126600_1_0_9"/>
<dbReference type="OrthoDB" id="6586670at2"/>
<dbReference type="Proteomes" id="UP000002513">
    <property type="component" value="Chromosome"/>
</dbReference>
<dbReference type="GO" id="GO:0005886">
    <property type="term" value="C:plasma membrane"/>
    <property type="evidence" value="ECO:0007669"/>
    <property type="project" value="UniProtKB-SubCell"/>
</dbReference>
<dbReference type="Gene3D" id="3.30.1830.10">
    <property type="entry name" value="YehR-like"/>
    <property type="match status" value="1"/>
</dbReference>
<dbReference type="InterPro" id="IPR009736">
    <property type="entry name" value="DUF1307"/>
</dbReference>
<dbReference type="InterPro" id="IPR036699">
    <property type="entry name" value="YehR-like_sf"/>
</dbReference>
<dbReference type="Pfam" id="PF06998">
    <property type="entry name" value="DUF1307"/>
    <property type="match status" value="1"/>
</dbReference>
<dbReference type="PIRSF" id="PIRSF006187">
    <property type="entry name" value="DUF1307"/>
    <property type="match status" value="1"/>
</dbReference>
<dbReference type="SUPFAM" id="SSF160704">
    <property type="entry name" value="YehR-like"/>
    <property type="match status" value="1"/>
</dbReference>
<dbReference type="PROSITE" id="PS51257">
    <property type="entry name" value="PROKAR_LIPOPROTEIN"/>
    <property type="match status" value="1"/>
</dbReference>
<organism>
    <name type="scientific">Listeria innocua serovar 6a (strain ATCC BAA-680 / CLIP 11262)</name>
    <dbReference type="NCBI Taxonomy" id="272626"/>
    <lineage>
        <taxon>Bacteria</taxon>
        <taxon>Bacillati</taxon>
        <taxon>Bacillota</taxon>
        <taxon>Bacilli</taxon>
        <taxon>Bacillales</taxon>
        <taxon>Listeriaceae</taxon>
        <taxon>Listeria</taxon>
    </lineage>
</organism>
<proteinExistence type="inferred from homology"/>
<accession>Q92F67</accession>
<sequence length="153" mass="17154">MKLLKKGTTVLFVMIMAVMLVACGDKEESKTFSLSQNGVDSKLTYTYKGDKVTKQTAENTMLYTSMGIKTKEEAEKMLKETSEKFQNIEGLKESIEYKDDKAIETLEVDYTKISSEDLKKLPGMASTGDVSKGISMKESEKMLKSQGFKEVEK</sequence>
<comment type="subcellular location">
    <subcellularLocation>
        <location evidence="1">Cell membrane</location>
        <topology evidence="1">Lipid-anchor</topology>
    </subcellularLocation>
</comment>
<comment type="similarity">
    <text evidence="3">To E.coli YehR.</text>
</comment>
<gene>
    <name type="ordered locus">lin0239</name>
</gene>
<name>Y239_LISIN</name>
<keyword id="KW-1003">Cell membrane</keyword>
<keyword id="KW-0449">Lipoprotein</keyword>
<keyword id="KW-0472">Membrane</keyword>
<keyword id="KW-0564">Palmitate</keyword>
<keyword id="KW-0732">Signal</keyword>
<reference key="1">
    <citation type="submission" date="1999-09" db="EMBL/GenBank/DDBJ databases">
        <title>The evolution of virulence determinants in the Listeria genus.</title>
        <authorList>
            <person name="Ng E.Y."/>
            <person name="Goebel W."/>
        </authorList>
    </citation>
    <scope>NUCLEOTIDE SEQUENCE [GENOMIC DNA]</scope>
    <source>
        <strain>Serovar 6b</strain>
    </source>
</reference>
<reference key="2">
    <citation type="journal article" date="2001" name="Science">
        <title>Comparative genomics of Listeria species.</title>
        <authorList>
            <person name="Glaser P."/>
            <person name="Frangeul L."/>
            <person name="Buchrieser C."/>
            <person name="Rusniok C."/>
            <person name="Amend A."/>
            <person name="Baquero F."/>
            <person name="Berche P."/>
            <person name="Bloecker H."/>
            <person name="Brandt P."/>
            <person name="Chakraborty T."/>
            <person name="Charbit A."/>
            <person name="Chetouani F."/>
            <person name="Couve E."/>
            <person name="de Daruvar A."/>
            <person name="Dehoux P."/>
            <person name="Domann E."/>
            <person name="Dominguez-Bernal G."/>
            <person name="Duchaud E."/>
            <person name="Durant L."/>
            <person name="Dussurget O."/>
            <person name="Entian K.-D."/>
            <person name="Fsihi H."/>
            <person name="Garcia-del Portillo F."/>
            <person name="Garrido P."/>
            <person name="Gautier L."/>
            <person name="Goebel W."/>
            <person name="Gomez-Lopez N."/>
            <person name="Hain T."/>
            <person name="Hauf J."/>
            <person name="Jackson D."/>
            <person name="Jones L.-M."/>
            <person name="Kaerst U."/>
            <person name="Kreft J."/>
            <person name="Kuhn M."/>
            <person name="Kunst F."/>
            <person name="Kurapkat G."/>
            <person name="Madueno E."/>
            <person name="Maitournam A."/>
            <person name="Mata Vicente J."/>
            <person name="Ng E."/>
            <person name="Nedjari H."/>
            <person name="Nordsiek G."/>
            <person name="Novella S."/>
            <person name="de Pablos B."/>
            <person name="Perez-Diaz J.-C."/>
            <person name="Purcell R."/>
            <person name="Remmel B."/>
            <person name="Rose M."/>
            <person name="Schlueter T."/>
            <person name="Simoes N."/>
            <person name="Tierrez A."/>
            <person name="Vazquez-Boland J.-A."/>
            <person name="Voss H."/>
            <person name="Wehland J."/>
            <person name="Cossart P."/>
        </authorList>
    </citation>
    <scope>NUCLEOTIDE SEQUENCE [LARGE SCALE GENOMIC DNA]</scope>
    <source>
        <strain>ATCC BAA-680 / CLIP 11262</strain>
    </source>
</reference>
<protein>
    <recommendedName>
        <fullName>Uncharacterized lipoprotein Lin0239</fullName>
    </recommendedName>
</protein>
<feature type="signal peptide" evidence="1">
    <location>
        <begin position="1"/>
        <end position="22"/>
    </location>
</feature>
<feature type="chain" id="PRO_0000018042" description="Uncharacterized lipoprotein Lin0239">
    <location>
        <begin position="23"/>
        <end position="153"/>
    </location>
</feature>
<feature type="region of interest" description="Disordered" evidence="2">
    <location>
        <begin position="121"/>
        <end position="153"/>
    </location>
</feature>
<feature type="compositionally biased region" description="Basic and acidic residues" evidence="2">
    <location>
        <begin position="135"/>
        <end position="153"/>
    </location>
</feature>
<feature type="lipid moiety-binding region" description="N-palmitoyl cysteine" evidence="1">
    <location>
        <position position="23"/>
    </location>
</feature>
<feature type="lipid moiety-binding region" description="S-diacylglycerol cysteine" evidence="1">
    <location>
        <position position="23"/>
    </location>
</feature>
<evidence type="ECO:0000255" key="1">
    <source>
        <dbReference type="PROSITE-ProRule" id="PRU00303"/>
    </source>
</evidence>
<evidence type="ECO:0000256" key="2">
    <source>
        <dbReference type="SAM" id="MobiDB-lite"/>
    </source>
</evidence>
<evidence type="ECO:0000305" key="3"/>